<protein>
    <recommendedName>
        <fullName>UPF0329 protein ECU04_1660</fullName>
    </recommendedName>
</protein>
<dbReference type="EMBL" id="AL590444">
    <property type="protein sequence ID" value="CAD25355.1"/>
    <property type="molecule type" value="Genomic_DNA"/>
</dbReference>
<dbReference type="RefSeq" id="NP_584851.1">
    <property type="nucleotide sequence ID" value="NM_001041201.1"/>
</dbReference>
<dbReference type="STRING" id="284813.Q8SVP3"/>
<dbReference type="GeneID" id="858999"/>
<dbReference type="KEGG" id="ecu:ECU04_1660"/>
<dbReference type="VEuPathDB" id="MicrosporidiaDB:ECU04_1660"/>
<dbReference type="HOGENOM" id="CLU_090379_0_0_1"/>
<dbReference type="InParanoid" id="Q8SVP3"/>
<dbReference type="Proteomes" id="UP000000819">
    <property type="component" value="Chromosome IV"/>
</dbReference>
<dbReference type="InterPro" id="IPR011667">
    <property type="entry name" value="UPF0329"/>
</dbReference>
<dbReference type="Pfam" id="PF07753">
    <property type="entry name" value="DUF1609"/>
    <property type="match status" value="1"/>
</dbReference>
<reference key="1">
    <citation type="journal article" date="2001" name="Nature">
        <title>Genome sequence and gene compaction of the eukaryote parasite Encephalitozoon cuniculi.</title>
        <authorList>
            <person name="Katinka M.D."/>
            <person name="Duprat S."/>
            <person name="Cornillot E."/>
            <person name="Metenier G."/>
            <person name="Thomarat F."/>
            <person name="Prensier G."/>
            <person name="Barbe V."/>
            <person name="Peyretaillade E."/>
            <person name="Brottier P."/>
            <person name="Wincker P."/>
            <person name="Delbac F."/>
            <person name="El Alaoui H."/>
            <person name="Peyret P."/>
            <person name="Saurin W."/>
            <person name="Gouy M."/>
            <person name="Weissenbach J."/>
            <person name="Vivares C.P."/>
        </authorList>
    </citation>
    <scope>NUCLEOTIDE SEQUENCE [LARGE SCALE GENOMIC DNA]</scope>
    <source>
        <strain>GB-M1</strain>
    </source>
</reference>
<sequence>MEERERGKEKGSKGKGRKKRGKKGAGEAKEESKEEDRGEEEEESVEADVPVEEMAAGGARPKKKSPKEKSKGEEHCYKVHKRVLRWMKSAERIKYELDNGEEEKWRGRSIEEIEEQKVLHDITEVLKLLRSKECDKFFARTGKYMKGGSERWNMVGVGILEEGGKKRVGNVEVGLFEGKGGENIIYHLMFKPTDFEEEGEGARPSFGRCDGVDAIEEGRISDMSGFQYPPGVRSEITSSGSEFRIVWKNQRDTSLVLRSLTVLRIPEIR</sequence>
<proteinExistence type="inferred from homology"/>
<comment type="similarity">
    <text evidence="2">Belongs to the UPF0329 family.</text>
</comment>
<keyword id="KW-1185">Reference proteome</keyword>
<gene>
    <name type="ordered locus">ECU04_1660</name>
</gene>
<evidence type="ECO:0000256" key="1">
    <source>
        <dbReference type="SAM" id="MobiDB-lite"/>
    </source>
</evidence>
<evidence type="ECO:0000305" key="2"/>
<accession>Q8SVP3</accession>
<name>Y4G6_ENCCU</name>
<organism>
    <name type="scientific">Encephalitozoon cuniculi (strain GB-M1)</name>
    <name type="common">Microsporidian parasite</name>
    <dbReference type="NCBI Taxonomy" id="284813"/>
    <lineage>
        <taxon>Eukaryota</taxon>
        <taxon>Fungi</taxon>
        <taxon>Fungi incertae sedis</taxon>
        <taxon>Microsporidia</taxon>
        <taxon>Unikaryonidae</taxon>
        <taxon>Encephalitozoon</taxon>
    </lineage>
</organism>
<feature type="chain" id="PRO_0000223157" description="UPF0329 protein ECU04_1660">
    <location>
        <begin position="1"/>
        <end position="269"/>
    </location>
</feature>
<feature type="region of interest" description="Disordered" evidence="1">
    <location>
        <begin position="1"/>
        <end position="74"/>
    </location>
</feature>
<feature type="compositionally biased region" description="Basic and acidic residues" evidence="1">
    <location>
        <begin position="1"/>
        <end position="12"/>
    </location>
</feature>
<feature type="compositionally biased region" description="Basic residues" evidence="1">
    <location>
        <begin position="13"/>
        <end position="23"/>
    </location>
</feature>
<feature type="compositionally biased region" description="Basic and acidic residues" evidence="1">
    <location>
        <begin position="24"/>
        <end position="36"/>
    </location>
</feature>
<feature type="compositionally biased region" description="Acidic residues" evidence="1">
    <location>
        <begin position="37"/>
        <end position="51"/>
    </location>
</feature>